<comment type="function">
    <text evidence="1">Catalyzes the conversion of urocanate to 4-imidazolone-5-propionate.</text>
</comment>
<comment type="catalytic activity">
    <reaction evidence="1">
        <text>4-imidazolone-5-propanoate = trans-urocanate + H2O</text>
        <dbReference type="Rhea" id="RHEA:13101"/>
        <dbReference type="ChEBI" id="CHEBI:15377"/>
        <dbReference type="ChEBI" id="CHEBI:17771"/>
        <dbReference type="ChEBI" id="CHEBI:77893"/>
        <dbReference type="EC" id="4.2.1.49"/>
    </reaction>
</comment>
<comment type="cofactor">
    <cofactor evidence="1">
        <name>NAD(+)</name>
        <dbReference type="ChEBI" id="CHEBI:57540"/>
    </cofactor>
    <text evidence="1">Binds 1 NAD(+) per subunit.</text>
</comment>
<comment type="pathway">
    <text evidence="1">Amino-acid degradation; L-histidine degradation into L-glutamate; N-formimidoyl-L-glutamate from L-histidine: step 2/3.</text>
</comment>
<comment type="subcellular location">
    <subcellularLocation>
        <location evidence="1">Cytoplasm</location>
    </subcellularLocation>
</comment>
<comment type="similarity">
    <text evidence="1">Belongs to the urocanase family.</text>
</comment>
<dbReference type="EC" id="4.2.1.49" evidence="1"/>
<dbReference type="EMBL" id="CP000449">
    <property type="protein sequence ID" value="ABI65893.1"/>
    <property type="molecule type" value="Genomic_DNA"/>
</dbReference>
<dbReference type="RefSeq" id="WP_011643540.1">
    <property type="nucleotide sequence ID" value="NC_008347.1"/>
</dbReference>
<dbReference type="SMR" id="Q0AP94"/>
<dbReference type="STRING" id="394221.Mmar10_1601"/>
<dbReference type="KEGG" id="mmr:Mmar10_1601"/>
<dbReference type="eggNOG" id="COG2987">
    <property type="taxonomic scope" value="Bacteria"/>
</dbReference>
<dbReference type="HOGENOM" id="CLU_018868_0_1_5"/>
<dbReference type="OrthoDB" id="9764874at2"/>
<dbReference type="UniPathway" id="UPA00379">
    <property type="reaction ID" value="UER00550"/>
</dbReference>
<dbReference type="Proteomes" id="UP000001964">
    <property type="component" value="Chromosome"/>
</dbReference>
<dbReference type="GO" id="GO:0005737">
    <property type="term" value="C:cytoplasm"/>
    <property type="evidence" value="ECO:0007669"/>
    <property type="project" value="UniProtKB-SubCell"/>
</dbReference>
<dbReference type="GO" id="GO:0016153">
    <property type="term" value="F:urocanate hydratase activity"/>
    <property type="evidence" value="ECO:0007669"/>
    <property type="project" value="UniProtKB-UniRule"/>
</dbReference>
<dbReference type="GO" id="GO:0019556">
    <property type="term" value="P:L-histidine catabolic process to glutamate and formamide"/>
    <property type="evidence" value="ECO:0007669"/>
    <property type="project" value="UniProtKB-UniPathway"/>
</dbReference>
<dbReference type="GO" id="GO:0019557">
    <property type="term" value="P:L-histidine catabolic process to glutamate and formate"/>
    <property type="evidence" value="ECO:0007669"/>
    <property type="project" value="UniProtKB-UniPathway"/>
</dbReference>
<dbReference type="FunFam" id="3.40.50.10730:FF:000001">
    <property type="entry name" value="Urocanate hydratase"/>
    <property type="match status" value="1"/>
</dbReference>
<dbReference type="Gene3D" id="3.40.50.10730">
    <property type="entry name" value="Urocanase like domains"/>
    <property type="match status" value="1"/>
</dbReference>
<dbReference type="Gene3D" id="3.40.1770.10">
    <property type="entry name" value="Urocanase superfamily"/>
    <property type="match status" value="1"/>
</dbReference>
<dbReference type="HAMAP" id="MF_00577">
    <property type="entry name" value="HutU"/>
    <property type="match status" value="1"/>
</dbReference>
<dbReference type="InterPro" id="IPR055351">
    <property type="entry name" value="Urocanase"/>
</dbReference>
<dbReference type="InterPro" id="IPR023637">
    <property type="entry name" value="Urocanase-like"/>
</dbReference>
<dbReference type="InterPro" id="IPR035401">
    <property type="entry name" value="Urocanase_C"/>
</dbReference>
<dbReference type="InterPro" id="IPR038364">
    <property type="entry name" value="Urocanase_central_sf"/>
</dbReference>
<dbReference type="InterPro" id="IPR023636">
    <property type="entry name" value="Urocanase_CS"/>
</dbReference>
<dbReference type="InterPro" id="IPR035400">
    <property type="entry name" value="Urocanase_N"/>
</dbReference>
<dbReference type="InterPro" id="IPR035085">
    <property type="entry name" value="Urocanase_Rossmann-like"/>
</dbReference>
<dbReference type="InterPro" id="IPR036190">
    <property type="entry name" value="Urocanase_sf"/>
</dbReference>
<dbReference type="NCBIfam" id="TIGR01228">
    <property type="entry name" value="hutU"/>
    <property type="match status" value="1"/>
</dbReference>
<dbReference type="NCBIfam" id="NF003820">
    <property type="entry name" value="PRK05414.1"/>
    <property type="match status" value="1"/>
</dbReference>
<dbReference type="PANTHER" id="PTHR12216">
    <property type="entry name" value="UROCANATE HYDRATASE"/>
    <property type="match status" value="1"/>
</dbReference>
<dbReference type="PANTHER" id="PTHR12216:SF4">
    <property type="entry name" value="UROCANATE HYDRATASE"/>
    <property type="match status" value="1"/>
</dbReference>
<dbReference type="Pfam" id="PF01175">
    <property type="entry name" value="Urocanase"/>
    <property type="match status" value="1"/>
</dbReference>
<dbReference type="Pfam" id="PF17392">
    <property type="entry name" value="Urocanase_C"/>
    <property type="match status" value="1"/>
</dbReference>
<dbReference type="Pfam" id="PF17391">
    <property type="entry name" value="Urocanase_N"/>
    <property type="match status" value="1"/>
</dbReference>
<dbReference type="PIRSF" id="PIRSF001423">
    <property type="entry name" value="Urocanate_hydrat"/>
    <property type="match status" value="1"/>
</dbReference>
<dbReference type="SUPFAM" id="SSF111326">
    <property type="entry name" value="Urocanase"/>
    <property type="match status" value="1"/>
</dbReference>
<dbReference type="PROSITE" id="PS01233">
    <property type="entry name" value="UROCANASE"/>
    <property type="match status" value="1"/>
</dbReference>
<gene>
    <name evidence="1" type="primary">hutU</name>
    <name type="ordered locus">Mmar10_1601</name>
</gene>
<organism>
    <name type="scientific">Maricaulis maris (strain MCS10)</name>
    <name type="common">Caulobacter maris</name>
    <dbReference type="NCBI Taxonomy" id="394221"/>
    <lineage>
        <taxon>Bacteria</taxon>
        <taxon>Pseudomonadati</taxon>
        <taxon>Pseudomonadota</taxon>
        <taxon>Alphaproteobacteria</taxon>
        <taxon>Maricaulales</taxon>
        <taxon>Maricaulaceae</taxon>
        <taxon>Maricaulis</taxon>
    </lineage>
</organism>
<accession>Q0AP94</accession>
<sequence>MTQTRRDNSRIIRAKHGSELDATHWAAEAPLRMLMNNLDPDVAEKPEELVVYGGIGRAARDWESYDRIVATLKRLKEDETLLVQSGKPVGVFRTHKDAPRVLIANSNLVPNWANWDHFRELDKKGLMMYGQMTAGSWIYIGSQGIVQGTYETFVEAGRQHYDGDLTGKWILTGGLGGMGGAQPLAATMAGASMLAVECQPSRIEMRLKTGYLDKSATTLDEALEIINAACAKGEAVSVGLLGNAAEVFPELVKRGVKPDMVTDQTSAHDPANGYLPAGWTLAEWDEKRESDPAAVEAAAKASMAEQVKAMLAFWEQGIPTLDYGNNIRQMAFDEGVTNAFDFPGFVPAYIRPLFCRGIGPFRWAALSGDPEDIYKTDAKVKELIPDNPHLHRWLDMARERIHFQGLPARICWVGLGERHKLGLAFNEMVRTGELSAPVVIGRDHLDSGSVASPNRETEAMMDGSDAVADWPLLNALLNTASGATWVSLHHGGGVGMGYSLHSGQVVLADGTVEAAERVGRVLWNDPGTGVMRHADAGYEIAKDCAKEQGLDLPSV</sequence>
<evidence type="ECO:0000255" key="1">
    <source>
        <dbReference type="HAMAP-Rule" id="MF_00577"/>
    </source>
</evidence>
<name>HUTU_MARMM</name>
<proteinExistence type="inferred from homology"/>
<feature type="chain" id="PRO_1000061178" description="Urocanate hydratase">
    <location>
        <begin position="1"/>
        <end position="555"/>
    </location>
</feature>
<feature type="active site" evidence="1">
    <location>
        <position position="411"/>
    </location>
</feature>
<feature type="binding site" evidence="1">
    <location>
        <begin position="53"/>
        <end position="54"/>
    </location>
    <ligand>
        <name>NAD(+)</name>
        <dbReference type="ChEBI" id="CHEBI:57540"/>
    </ligand>
</feature>
<feature type="binding site" evidence="1">
    <location>
        <position position="131"/>
    </location>
    <ligand>
        <name>NAD(+)</name>
        <dbReference type="ChEBI" id="CHEBI:57540"/>
    </ligand>
</feature>
<feature type="binding site" evidence="1">
    <location>
        <begin position="177"/>
        <end position="179"/>
    </location>
    <ligand>
        <name>NAD(+)</name>
        <dbReference type="ChEBI" id="CHEBI:57540"/>
    </ligand>
</feature>
<feature type="binding site" evidence="1">
    <location>
        <position position="197"/>
    </location>
    <ligand>
        <name>NAD(+)</name>
        <dbReference type="ChEBI" id="CHEBI:57540"/>
    </ligand>
</feature>
<feature type="binding site" evidence="1">
    <location>
        <position position="202"/>
    </location>
    <ligand>
        <name>NAD(+)</name>
        <dbReference type="ChEBI" id="CHEBI:57540"/>
    </ligand>
</feature>
<feature type="binding site" evidence="1">
    <location>
        <begin position="243"/>
        <end position="244"/>
    </location>
    <ligand>
        <name>NAD(+)</name>
        <dbReference type="ChEBI" id="CHEBI:57540"/>
    </ligand>
</feature>
<feature type="binding site" evidence="1">
    <location>
        <begin position="264"/>
        <end position="268"/>
    </location>
    <ligand>
        <name>NAD(+)</name>
        <dbReference type="ChEBI" id="CHEBI:57540"/>
    </ligand>
</feature>
<feature type="binding site" evidence="1">
    <location>
        <begin position="274"/>
        <end position="275"/>
    </location>
    <ligand>
        <name>NAD(+)</name>
        <dbReference type="ChEBI" id="CHEBI:57540"/>
    </ligand>
</feature>
<feature type="binding site" evidence="1">
    <location>
        <position position="323"/>
    </location>
    <ligand>
        <name>NAD(+)</name>
        <dbReference type="ChEBI" id="CHEBI:57540"/>
    </ligand>
</feature>
<feature type="binding site" evidence="1">
    <location>
        <position position="493"/>
    </location>
    <ligand>
        <name>NAD(+)</name>
        <dbReference type="ChEBI" id="CHEBI:57540"/>
    </ligand>
</feature>
<keyword id="KW-0963">Cytoplasm</keyword>
<keyword id="KW-0369">Histidine metabolism</keyword>
<keyword id="KW-0456">Lyase</keyword>
<keyword id="KW-0520">NAD</keyword>
<keyword id="KW-1185">Reference proteome</keyword>
<protein>
    <recommendedName>
        <fullName evidence="1">Urocanate hydratase</fullName>
        <shortName evidence="1">Urocanase</shortName>
        <ecNumber evidence="1">4.2.1.49</ecNumber>
    </recommendedName>
    <alternativeName>
        <fullName evidence="1">Imidazolonepropionate hydrolase</fullName>
    </alternativeName>
</protein>
<reference key="1">
    <citation type="submission" date="2006-08" db="EMBL/GenBank/DDBJ databases">
        <title>Complete sequence of Maricaulis maris MCS10.</title>
        <authorList>
            <consortium name="US DOE Joint Genome Institute"/>
            <person name="Copeland A."/>
            <person name="Lucas S."/>
            <person name="Lapidus A."/>
            <person name="Barry K."/>
            <person name="Detter J.C."/>
            <person name="Glavina del Rio T."/>
            <person name="Hammon N."/>
            <person name="Israni S."/>
            <person name="Dalin E."/>
            <person name="Tice H."/>
            <person name="Pitluck S."/>
            <person name="Saunders E."/>
            <person name="Brettin T."/>
            <person name="Bruce D."/>
            <person name="Han C."/>
            <person name="Tapia R."/>
            <person name="Gilna P."/>
            <person name="Schmutz J."/>
            <person name="Larimer F."/>
            <person name="Land M."/>
            <person name="Hauser L."/>
            <person name="Kyrpides N."/>
            <person name="Mikhailova N."/>
            <person name="Viollier P."/>
            <person name="Stephens C."/>
            <person name="Richardson P."/>
        </authorList>
    </citation>
    <scope>NUCLEOTIDE SEQUENCE [LARGE SCALE GENOMIC DNA]</scope>
    <source>
        <strain>MCS10</strain>
    </source>
</reference>